<dbReference type="EMBL" id="CP000111">
    <property type="protein sequence ID" value="ABB49452.1"/>
    <property type="molecule type" value="Genomic_DNA"/>
</dbReference>
<dbReference type="RefSeq" id="WP_011375952.1">
    <property type="nucleotide sequence ID" value="NC_007577.1"/>
</dbReference>
<dbReference type="SMR" id="Q31CE3"/>
<dbReference type="STRING" id="74546.PMT9312_0391"/>
<dbReference type="KEGG" id="pmi:PMT9312_0391"/>
<dbReference type="eggNOG" id="COG1799">
    <property type="taxonomic scope" value="Bacteria"/>
</dbReference>
<dbReference type="HOGENOM" id="CLU_078499_1_0_3"/>
<dbReference type="OrthoDB" id="9815206at2"/>
<dbReference type="Proteomes" id="UP000002715">
    <property type="component" value="Chromosome"/>
</dbReference>
<dbReference type="GO" id="GO:0005737">
    <property type="term" value="C:cytoplasm"/>
    <property type="evidence" value="ECO:0007669"/>
    <property type="project" value="UniProtKB-SubCell"/>
</dbReference>
<dbReference type="GO" id="GO:0000917">
    <property type="term" value="P:division septum assembly"/>
    <property type="evidence" value="ECO:0007669"/>
    <property type="project" value="UniProtKB-KW"/>
</dbReference>
<dbReference type="GO" id="GO:0043093">
    <property type="term" value="P:FtsZ-dependent cytokinesis"/>
    <property type="evidence" value="ECO:0007669"/>
    <property type="project" value="UniProtKB-UniRule"/>
</dbReference>
<dbReference type="Gene3D" id="3.30.110.150">
    <property type="entry name" value="SepF-like protein"/>
    <property type="match status" value="1"/>
</dbReference>
<dbReference type="HAMAP" id="MF_01197">
    <property type="entry name" value="SepF"/>
    <property type="match status" value="1"/>
</dbReference>
<dbReference type="InterPro" id="IPR023052">
    <property type="entry name" value="Cell_div_SepF"/>
</dbReference>
<dbReference type="InterPro" id="IPR007561">
    <property type="entry name" value="Cell_div_SepF/SepF-rel"/>
</dbReference>
<dbReference type="InterPro" id="IPR038594">
    <property type="entry name" value="SepF-like_sf"/>
</dbReference>
<dbReference type="PANTHER" id="PTHR35798">
    <property type="entry name" value="CELL DIVISION PROTEIN SEPF"/>
    <property type="match status" value="1"/>
</dbReference>
<dbReference type="PANTHER" id="PTHR35798:SF1">
    <property type="entry name" value="CELL DIVISION PROTEIN SEPF"/>
    <property type="match status" value="1"/>
</dbReference>
<dbReference type="Pfam" id="PF04472">
    <property type="entry name" value="SepF"/>
    <property type="match status" value="1"/>
</dbReference>
<gene>
    <name evidence="1" type="primary">sepF</name>
    <name type="ordered locus">PMT9312_0391</name>
</gene>
<keyword id="KW-0131">Cell cycle</keyword>
<keyword id="KW-0132">Cell division</keyword>
<keyword id="KW-0963">Cytoplasm</keyword>
<keyword id="KW-0717">Septation</keyword>
<evidence type="ECO:0000255" key="1">
    <source>
        <dbReference type="HAMAP-Rule" id="MF_01197"/>
    </source>
</evidence>
<evidence type="ECO:0000256" key="2">
    <source>
        <dbReference type="SAM" id="MobiDB-lite"/>
    </source>
</evidence>
<accession>Q31CE3</accession>
<sequence length="191" mass="20941">MSLISRLKAVVAGDEYLDDDFDELDYATEDELNDINDFKQTQRNSNALANSNPFDFMNNNRSSKVVGMPGISNSSSEVSLMEPRSFDEMPQAIQALRERKTVILNLTMMDPDQAQRAVDFIAGGTYAIDGHQERVGESIFLFAPSCVNVTSSSPEEASPSSVSPKNTPQYSVENNTAPEPAWGNSKLSAFS</sequence>
<name>SEPF_PROM9</name>
<protein>
    <recommendedName>
        <fullName evidence="1">Cell division protein SepF</fullName>
    </recommendedName>
</protein>
<feature type="chain" id="PRO_0000334061" description="Cell division protein SepF">
    <location>
        <begin position="1"/>
        <end position="191"/>
    </location>
</feature>
<feature type="region of interest" description="Disordered" evidence="2">
    <location>
        <begin position="150"/>
        <end position="191"/>
    </location>
</feature>
<feature type="compositionally biased region" description="Low complexity" evidence="2">
    <location>
        <begin position="151"/>
        <end position="164"/>
    </location>
</feature>
<feature type="compositionally biased region" description="Polar residues" evidence="2">
    <location>
        <begin position="165"/>
        <end position="177"/>
    </location>
</feature>
<comment type="function">
    <text evidence="1">Cell division protein that is part of the divisome complex and is recruited early to the Z-ring. Probably stimulates Z-ring formation, perhaps through the cross-linking of FtsZ protofilaments. Its function overlaps with FtsA.</text>
</comment>
<comment type="subunit">
    <text evidence="1">Homodimer. Interacts with FtsZ.</text>
</comment>
<comment type="subcellular location">
    <subcellularLocation>
        <location evidence="1">Cytoplasm</location>
    </subcellularLocation>
    <text evidence="1">Localizes to the division site, in a FtsZ-dependent manner.</text>
</comment>
<comment type="similarity">
    <text evidence="1">Belongs to the SepF family.</text>
</comment>
<proteinExistence type="inferred from homology"/>
<organism>
    <name type="scientific">Prochlorococcus marinus (strain MIT 9312)</name>
    <dbReference type="NCBI Taxonomy" id="74546"/>
    <lineage>
        <taxon>Bacteria</taxon>
        <taxon>Bacillati</taxon>
        <taxon>Cyanobacteriota</taxon>
        <taxon>Cyanophyceae</taxon>
        <taxon>Synechococcales</taxon>
        <taxon>Prochlorococcaceae</taxon>
        <taxon>Prochlorococcus</taxon>
    </lineage>
</organism>
<reference key="1">
    <citation type="journal article" date="2006" name="Science">
        <title>Genomic islands and the ecology and evolution of Prochlorococcus.</title>
        <authorList>
            <person name="Coleman M.L."/>
            <person name="Sullivan M.B."/>
            <person name="Martiny A.C."/>
            <person name="Steglich C."/>
            <person name="Barry K."/>
            <person name="Delong E.F."/>
            <person name="Chisholm S.W."/>
        </authorList>
    </citation>
    <scope>NUCLEOTIDE SEQUENCE [LARGE SCALE GENOMIC DNA]</scope>
    <source>
        <strain>MIT 9312</strain>
    </source>
</reference>